<name>PDE1B_HUMAN</name>
<sequence>MELSPRSPPEMLEESDCPSPLELKSAPSKKMWIKLRSLLRYMVKQLENGEINIEELKKNLEYTASLLEAVYIDETRQILDTEDELQELRSDAVPSEVRDWLASTFTQQARAKGRRAEEKPKFRSIVHAVQAGIFVERMFRRTYTSVGPTYSTAVLNCLKNLDLWCFDVFSLNQAADDHALRTIVFELLTRHNLISRFKIPTVFLMSFLDALETGYGKYKNPYHNQIHAADVTQTVHCFLLRTGMVHCLSEIELLAIIFAAAIHDYEHTGTTNSFHIQTKSECAIVYNDRSVLENHHISSVFRLMQDDEMNIFINLTKDEFVELRALVIEMVLATDMSCHFQQVKTMKTALQQLERIDKPKALSLLLHAADISHPTKQWLVHSRWTKALMEEFFRQGDKEAELGLPFSPLCDRTSTLVAQSQIGFIDFIVEPTFSVLTDVAEKSVQPLADEDSKSKNQPSFQWRQPSLDVEVGDPNPDVVSFRSTWVKRIQENKQKWKERAASGITNQMSIDELSPCEEEAPPSPAEDEHNQNGNLD</sequence>
<reference key="1">
    <citation type="journal article" date="1996" name="Proc. Natl. Acad. Sci. U.S.A.">
        <title>Inhibition of calmodulin-dependent phosphodiesterase induces apoptosis in human leukemic cells.</title>
        <authorList>
            <person name="Jiang X."/>
            <person name="Li J."/>
            <person name="Paskind M."/>
            <person name="Epstein P.M."/>
        </authorList>
    </citation>
    <scope>NUCLEOTIDE SEQUENCE [MRNA] (ISOFORM PDE1B1)</scope>
    <scope>FUNCTION</scope>
    <scope>CATALYTIC ACTIVITY</scope>
    <scope>SUBCELLULAR LOCATION</scope>
</reference>
<reference key="2">
    <citation type="journal article" date="1997" name="Cell. Signal.">
        <title>Identification and characterisation of a human calmodulin-stimulated phosphodiesterase PDE1B1.</title>
        <authorList>
            <person name="Yu J."/>
            <person name="Frazier A.L.B."/>
            <person name="Wolda S.L."/>
            <person name="Florio V.A."/>
            <person name="Martins T.J."/>
            <person name="Snyder P.B."/>
            <person name="Harris E.A.S."/>
            <person name="McCaw K.N."/>
            <person name="Farrell C.A."/>
            <person name="Steiner B."/>
            <person name="Bentley J.K."/>
            <person name="Beavo J.A."/>
            <person name="Ferguson K."/>
            <person name="Gelinas R."/>
        </authorList>
    </citation>
    <scope>NUCLEOTIDE SEQUENCE [MRNA] (ISOFORM PDE1B1)</scope>
    <scope>FUNCTION</scope>
    <scope>CATALYTIC ACTIVITY</scope>
    <scope>ACTIVITY REGULATION</scope>
    <source>
        <tissue>Brain</tissue>
    </source>
</reference>
<reference key="3">
    <citation type="journal article" date="2002" name="Cell. Signal.">
        <title>Isolation and differential tissue distribution of two human cDNAs encoding PDE1 splice variants.</title>
        <authorList>
            <person name="Fidock M.D."/>
            <person name="Miller M."/>
            <person name="Lanfear J."/>
        </authorList>
    </citation>
    <scope>NUCLEOTIDE SEQUENCE [MRNA] (ISOFORM PDE1B2)</scope>
    <source>
        <tissue>Testis</tissue>
    </source>
</reference>
<reference key="4">
    <citation type="journal article" date="2004" name="Nat. Genet.">
        <title>Complete sequencing and characterization of 21,243 full-length human cDNAs.</title>
        <authorList>
            <person name="Ota T."/>
            <person name="Suzuki Y."/>
            <person name="Nishikawa T."/>
            <person name="Otsuki T."/>
            <person name="Sugiyama T."/>
            <person name="Irie R."/>
            <person name="Wakamatsu A."/>
            <person name="Hayashi K."/>
            <person name="Sato H."/>
            <person name="Nagai K."/>
            <person name="Kimura K."/>
            <person name="Makita H."/>
            <person name="Sekine M."/>
            <person name="Obayashi M."/>
            <person name="Nishi T."/>
            <person name="Shibahara T."/>
            <person name="Tanaka T."/>
            <person name="Ishii S."/>
            <person name="Yamamoto J."/>
            <person name="Saito K."/>
            <person name="Kawai Y."/>
            <person name="Isono Y."/>
            <person name="Nakamura Y."/>
            <person name="Nagahari K."/>
            <person name="Murakami K."/>
            <person name="Yasuda T."/>
            <person name="Iwayanagi T."/>
            <person name="Wagatsuma M."/>
            <person name="Shiratori A."/>
            <person name="Sudo H."/>
            <person name="Hosoiri T."/>
            <person name="Kaku Y."/>
            <person name="Kodaira H."/>
            <person name="Kondo H."/>
            <person name="Sugawara M."/>
            <person name="Takahashi M."/>
            <person name="Kanda K."/>
            <person name="Yokoi T."/>
            <person name="Furuya T."/>
            <person name="Kikkawa E."/>
            <person name="Omura Y."/>
            <person name="Abe K."/>
            <person name="Kamihara K."/>
            <person name="Katsuta N."/>
            <person name="Sato K."/>
            <person name="Tanikawa M."/>
            <person name="Yamazaki M."/>
            <person name="Ninomiya K."/>
            <person name="Ishibashi T."/>
            <person name="Yamashita H."/>
            <person name="Murakawa K."/>
            <person name="Fujimori K."/>
            <person name="Tanai H."/>
            <person name="Kimata M."/>
            <person name="Watanabe M."/>
            <person name="Hiraoka S."/>
            <person name="Chiba Y."/>
            <person name="Ishida S."/>
            <person name="Ono Y."/>
            <person name="Takiguchi S."/>
            <person name="Watanabe S."/>
            <person name="Yosida M."/>
            <person name="Hotuta T."/>
            <person name="Kusano J."/>
            <person name="Kanehori K."/>
            <person name="Takahashi-Fujii A."/>
            <person name="Hara H."/>
            <person name="Tanase T.-O."/>
            <person name="Nomura Y."/>
            <person name="Togiya S."/>
            <person name="Komai F."/>
            <person name="Hara R."/>
            <person name="Takeuchi K."/>
            <person name="Arita M."/>
            <person name="Imose N."/>
            <person name="Musashino K."/>
            <person name="Yuuki H."/>
            <person name="Oshima A."/>
            <person name="Sasaki N."/>
            <person name="Aotsuka S."/>
            <person name="Yoshikawa Y."/>
            <person name="Matsunawa H."/>
            <person name="Ichihara T."/>
            <person name="Shiohata N."/>
            <person name="Sano S."/>
            <person name="Moriya S."/>
            <person name="Momiyama H."/>
            <person name="Satoh N."/>
            <person name="Takami S."/>
            <person name="Terashima Y."/>
            <person name="Suzuki O."/>
            <person name="Nakagawa S."/>
            <person name="Senoh A."/>
            <person name="Mizoguchi H."/>
            <person name="Goto Y."/>
            <person name="Shimizu F."/>
            <person name="Wakebe H."/>
            <person name="Hishigaki H."/>
            <person name="Watanabe T."/>
            <person name="Sugiyama A."/>
            <person name="Takemoto M."/>
            <person name="Kawakami B."/>
            <person name="Yamazaki M."/>
            <person name="Watanabe K."/>
            <person name="Kumagai A."/>
            <person name="Itakura S."/>
            <person name="Fukuzumi Y."/>
            <person name="Fujimori Y."/>
            <person name="Komiyama M."/>
            <person name="Tashiro H."/>
            <person name="Tanigami A."/>
            <person name="Fujiwara T."/>
            <person name="Ono T."/>
            <person name="Yamada K."/>
            <person name="Fujii Y."/>
            <person name="Ozaki K."/>
            <person name="Hirao M."/>
            <person name="Ohmori Y."/>
            <person name="Kawabata A."/>
            <person name="Hikiji T."/>
            <person name="Kobatake N."/>
            <person name="Inagaki H."/>
            <person name="Ikema Y."/>
            <person name="Okamoto S."/>
            <person name="Okitani R."/>
            <person name="Kawakami T."/>
            <person name="Noguchi S."/>
            <person name="Itoh T."/>
            <person name="Shigeta K."/>
            <person name="Senba T."/>
            <person name="Matsumura K."/>
            <person name="Nakajima Y."/>
            <person name="Mizuno T."/>
            <person name="Morinaga M."/>
            <person name="Sasaki M."/>
            <person name="Togashi T."/>
            <person name="Oyama M."/>
            <person name="Hata H."/>
            <person name="Watanabe M."/>
            <person name="Komatsu T."/>
            <person name="Mizushima-Sugano J."/>
            <person name="Satoh T."/>
            <person name="Shirai Y."/>
            <person name="Takahashi Y."/>
            <person name="Nakagawa K."/>
            <person name="Okumura K."/>
            <person name="Nagase T."/>
            <person name="Nomura N."/>
            <person name="Kikuchi H."/>
            <person name="Masuho Y."/>
            <person name="Yamashita R."/>
            <person name="Nakai K."/>
            <person name="Yada T."/>
            <person name="Nakamura Y."/>
            <person name="Ohara O."/>
            <person name="Isogai T."/>
            <person name="Sugano S."/>
        </authorList>
    </citation>
    <scope>NUCLEOTIDE SEQUENCE [LARGE SCALE MRNA] (ISOFORM PDE1B2)</scope>
    <source>
        <tissue>Testis</tissue>
    </source>
</reference>
<reference key="5">
    <citation type="submission" date="2005-07" db="EMBL/GenBank/DDBJ databases">
        <authorList>
            <person name="Mural R.J."/>
            <person name="Istrail S."/>
            <person name="Sutton G.G."/>
            <person name="Florea L."/>
            <person name="Halpern A.L."/>
            <person name="Mobarry C.M."/>
            <person name="Lippert R."/>
            <person name="Walenz B."/>
            <person name="Shatkay H."/>
            <person name="Dew I."/>
            <person name="Miller J.R."/>
            <person name="Flanigan M.J."/>
            <person name="Edwards N.J."/>
            <person name="Bolanos R."/>
            <person name="Fasulo D."/>
            <person name="Halldorsson B.V."/>
            <person name="Hannenhalli S."/>
            <person name="Turner R."/>
            <person name="Yooseph S."/>
            <person name="Lu F."/>
            <person name="Nusskern D.R."/>
            <person name="Shue B.C."/>
            <person name="Zheng X.H."/>
            <person name="Zhong F."/>
            <person name="Delcher A.L."/>
            <person name="Huson D.H."/>
            <person name="Kravitz S.A."/>
            <person name="Mouchard L."/>
            <person name="Reinert K."/>
            <person name="Remington K.A."/>
            <person name="Clark A.G."/>
            <person name="Waterman M.S."/>
            <person name="Eichler E.E."/>
            <person name="Adams M.D."/>
            <person name="Hunkapiller M.W."/>
            <person name="Myers E.W."/>
            <person name="Venter J.C."/>
        </authorList>
    </citation>
    <scope>NUCLEOTIDE SEQUENCE [LARGE SCALE GENOMIC DNA]</scope>
</reference>
<reference key="6">
    <citation type="journal article" date="2004" name="Genome Res.">
        <title>The status, quality, and expansion of the NIH full-length cDNA project: the Mammalian Gene Collection (MGC).</title>
        <authorList>
            <consortium name="The MGC Project Team"/>
        </authorList>
    </citation>
    <scope>NUCLEOTIDE SEQUENCE [LARGE SCALE MRNA] (ISOFORM PDE1B1)</scope>
    <source>
        <tissue>Brain</tissue>
    </source>
</reference>
<reference key="7">
    <citation type="journal article" date="1992" name="J. Biol. Chem.">
        <title>A polymerase chain reaction strategy to identify and clone cyclic nucleotide phosphodiesterase cDNAs. Molecular cloning of the cDNA encoding the 63-kDa calmodulin-dependent phosphodiesterase.</title>
        <authorList>
            <person name="Repaske D.R."/>
            <person name="Swinnen J.V."/>
            <person name="Jin S.-L.C."/>
            <person name="van Wyk J.J."/>
            <person name="Conti M."/>
        </authorList>
    </citation>
    <scope>NUCLEOTIDE SEQUENCE [MRNA] OF 222-337</scope>
</reference>
<reference evidence="17" key="8">
    <citation type="journal article" date="2004" name="Mol. Cell">
        <title>A glutamine switch mechanism for nucleotide selectivity by phosphodiesterases.</title>
        <authorList>
            <person name="Zhang K.Y.J."/>
            <person name="Card G.L."/>
            <person name="Suzuki Y."/>
            <person name="Artis D.R."/>
            <person name="Fong D."/>
            <person name="Gillette S."/>
            <person name="Hsieh D."/>
            <person name="Neiman J."/>
            <person name="West B.L."/>
            <person name="Zhang C."/>
            <person name="Milburn M.V."/>
            <person name="Kim S.-H."/>
            <person name="Schlessinger J."/>
            <person name="Bollag G."/>
        </authorList>
    </citation>
    <scope>X-RAY CRYSTALLOGRAPHY (1.77 ANGSTROMS) OF 146-506 IN COMPLEX WITH METAL IONS</scope>
    <scope>COFACTOR</scope>
    <scope>FUNCTION</scope>
    <scope>CATALYTIC ACTIVITY</scope>
</reference>
<dbReference type="EC" id="3.1.4.17" evidence="6 7 8"/>
<dbReference type="EMBL" id="U56976">
    <property type="protein sequence ID" value="AAC50769.1"/>
    <property type="molecule type" value="mRNA"/>
</dbReference>
<dbReference type="EMBL" id="U86078">
    <property type="protein sequence ID" value="AAC51872.1"/>
    <property type="molecule type" value="mRNA"/>
</dbReference>
<dbReference type="EMBL" id="AJ401609">
    <property type="protein sequence ID" value="CAC82207.1"/>
    <property type="molecule type" value="mRNA"/>
</dbReference>
<dbReference type="EMBL" id="AK302931">
    <property type="protein sequence ID" value="BAG64092.1"/>
    <property type="molecule type" value="mRNA"/>
</dbReference>
<dbReference type="EMBL" id="CH471054">
    <property type="protein sequence ID" value="EAW96790.1"/>
    <property type="molecule type" value="Genomic_DNA"/>
</dbReference>
<dbReference type="EMBL" id="BC032226">
    <property type="protein sequence ID" value="AAH32226.1"/>
    <property type="molecule type" value="mRNA"/>
</dbReference>
<dbReference type="EMBL" id="M94539">
    <property type="protein sequence ID" value="AAA58405.1"/>
    <property type="molecule type" value="mRNA"/>
</dbReference>
<dbReference type="CCDS" id="CCDS53800.1">
    <molecule id="Q01064-2"/>
</dbReference>
<dbReference type="CCDS" id="CCDS8882.1">
    <molecule id="Q01064-1"/>
</dbReference>
<dbReference type="PIR" id="JC6129">
    <property type="entry name" value="JC6129"/>
</dbReference>
<dbReference type="RefSeq" id="NP_000915.1">
    <molecule id="Q01064-1"/>
    <property type="nucleotide sequence ID" value="NM_000924.4"/>
</dbReference>
<dbReference type="RefSeq" id="NP_001159447.1">
    <molecule id="Q01064-2"/>
    <property type="nucleotide sequence ID" value="NM_001165975.3"/>
</dbReference>
<dbReference type="RefSeq" id="NP_001275697.1">
    <property type="nucleotide sequence ID" value="NM_001288768.1"/>
</dbReference>
<dbReference type="RefSeq" id="NP_001275698.1">
    <property type="nucleotide sequence ID" value="NM_001288769.1"/>
</dbReference>
<dbReference type="RefSeq" id="NP_001302463.1">
    <property type="nucleotide sequence ID" value="NM_001315534.1"/>
</dbReference>
<dbReference type="RefSeq" id="NP_001302464.1">
    <property type="nucleotide sequence ID" value="NM_001315535.1"/>
</dbReference>
<dbReference type="PDB" id="1TAZ">
    <property type="method" value="X-ray"/>
    <property type="resolution" value="1.77 A"/>
    <property type="chains" value="A=146-506"/>
</dbReference>
<dbReference type="PDB" id="4NPV">
    <property type="method" value="X-ray"/>
    <property type="resolution" value="2.40 A"/>
    <property type="chains" value="A=142-507"/>
</dbReference>
<dbReference type="PDB" id="4NPW">
    <property type="method" value="X-ray"/>
    <property type="resolution" value="1.90 A"/>
    <property type="chains" value="A=142-507"/>
</dbReference>
<dbReference type="PDB" id="5B25">
    <property type="method" value="X-ray"/>
    <property type="resolution" value="1.90 A"/>
    <property type="chains" value="A/B/C/D=146-506"/>
</dbReference>
<dbReference type="PDB" id="5UOY">
    <property type="method" value="X-ray"/>
    <property type="resolution" value="1.82 A"/>
    <property type="chains" value="A=146-506"/>
</dbReference>
<dbReference type="PDB" id="5UP0">
    <property type="method" value="X-ray"/>
    <property type="resolution" value="2.04 A"/>
    <property type="chains" value="A=146-506"/>
</dbReference>
<dbReference type="PDB" id="5W6E">
    <property type="method" value="X-ray"/>
    <property type="resolution" value="1.90 A"/>
    <property type="chains" value="A=142-507"/>
</dbReference>
<dbReference type="PDBsum" id="1TAZ"/>
<dbReference type="PDBsum" id="4NPV"/>
<dbReference type="PDBsum" id="4NPW"/>
<dbReference type="PDBsum" id="5B25"/>
<dbReference type="PDBsum" id="5UOY"/>
<dbReference type="PDBsum" id="5UP0"/>
<dbReference type="PDBsum" id="5W6E"/>
<dbReference type="SMR" id="Q01064"/>
<dbReference type="BioGRID" id="111179">
    <property type="interactions" value="4"/>
</dbReference>
<dbReference type="CORUM" id="Q01064"/>
<dbReference type="FunCoup" id="Q01064">
    <property type="interactions" value="1426"/>
</dbReference>
<dbReference type="IntAct" id="Q01064">
    <property type="interactions" value="3"/>
</dbReference>
<dbReference type="MINT" id="Q01064"/>
<dbReference type="STRING" id="9606.ENSP00000243052"/>
<dbReference type="BindingDB" id="Q01064"/>
<dbReference type="ChEMBL" id="CHEMBL4425"/>
<dbReference type="DrugBank" id="DB01244">
    <property type="generic name" value="Bepridil"/>
</dbReference>
<dbReference type="DrugBank" id="DB00201">
    <property type="generic name" value="Caffeine"/>
</dbReference>
<dbReference type="DrugBank" id="DB01023">
    <property type="generic name" value="Felodipine"/>
</dbReference>
<dbReference type="DrugBank" id="DB00622">
    <property type="generic name" value="Nicardipine"/>
</dbReference>
<dbReference type="DrugBank" id="DB01113">
    <property type="generic name" value="Papaverine"/>
</dbReference>
<dbReference type="DrugBank" id="DB04530">
    <property type="generic name" value="S,S-(2-Hydroxyethyl)Thiocysteine"/>
</dbReference>
<dbReference type="DrugBank" id="DB09283">
    <property type="generic name" value="Trapidil"/>
</dbReference>
<dbReference type="DrugCentral" id="Q01064"/>
<dbReference type="GuidetoPHARMACOLOGY" id="1295"/>
<dbReference type="GlyGen" id="Q01064">
    <property type="glycosylation" value="1 site"/>
</dbReference>
<dbReference type="iPTMnet" id="Q01064"/>
<dbReference type="PhosphoSitePlus" id="Q01064"/>
<dbReference type="BioMuta" id="PDE1B"/>
<dbReference type="DMDM" id="3183514"/>
<dbReference type="jPOST" id="Q01064"/>
<dbReference type="MassIVE" id="Q01064"/>
<dbReference type="PaxDb" id="9606-ENSP00000243052"/>
<dbReference type="PeptideAtlas" id="Q01064"/>
<dbReference type="ProteomicsDB" id="57904">
    <molecule id="Q01064-1"/>
</dbReference>
<dbReference type="ProteomicsDB" id="57905">
    <molecule id="Q01064-2"/>
</dbReference>
<dbReference type="Antibodypedia" id="15408">
    <property type="antibodies" value="408 antibodies from 31 providers"/>
</dbReference>
<dbReference type="DNASU" id="5153"/>
<dbReference type="Ensembl" id="ENST00000243052.8">
    <molecule id="Q01064-1"/>
    <property type="protein sequence ID" value="ENSP00000243052.3"/>
    <property type="gene ID" value="ENSG00000123360.12"/>
</dbReference>
<dbReference type="Ensembl" id="ENST00000550620.1">
    <molecule id="Q01064-2"/>
    <property type="protein sequence ID" value="ENSP00000448519.1"/>
    <property type="gene ID" value="ENSG00000123360.12"/>
</dbReference>
<dbReference type="GeneID" id="5153"/>
<dbReference type="KEGG" id="hsa:5153"/>
<dbReference type="MANE-Select" id="ENST00000243052.8">
    <property type="protein sequence ID" value="ENSP00000243052.3"/>
    <property type="RefSeq nucleotide sequence ID" value="NM_000924.4"/>
    <property type="RefSeq protein sequence ID" value="NP_000915.1"/>
</dbReference>
<dbReference type="UCSC" id="uc001sgd.3">
    <molecule id="Q01064-1"/>
    <property type="organism name" value="human"/>
</dbReference>
<dbReference type="AGR" id="HGNC:8775"/>
<dbReference type="CTD" id="5153"/>
<dbReference type="DisGeNET" id="5153"/>
<dbReference type="GeneCards" id="PDE1B"/>
<dbReference type="HGNC" id="HGNC:8775">
    <property type="gene designation" value="PDE1B"/>
</dbReference>
<dbReference type="HPA" id="ENSG00000123360">
    <property type="expression patterns" value="Tissue enriched (brain)"/>
</dbReference>
<dbReference type="MIM" id="171891">
    <property type="type" value="gene"/>
</dbReference>
<dbReference type="neXtProt" id="NX_Q01064"/>
<dbReference type="OpenTargets" id="ENSG00000123360"/>
<dbReference type="PharmGKB" id="PA33123"/>
<dbReference type="VEuPathDB" id="HostDB:ENSG00000123360"/>
<dbReference type="eggNOG" id="KOG3688">
    <property type="taxonomic scope" value="Eukaryota"/>
</dbReference>
<dbReference type="GeneTree" id="ENSGT00940000160712"/>
<dbReference type="HOGENOM" id="CLU_005940_1_0_1"/>
<dbReference type="InParanoid" id="Q01064"/>
<dbReference type="OMA" id="KPWIPCL"/>
<dbReference type="OrthoDB" id="189220at2759"/>
<dbReference type="PAN-GO" id="Q01064">
    <property type="GO annotations" value="3 GO annotations based on evolutionary models"/>
</dbReference>
<dbReference type="PhylomeDB" id="Q01064"/>
<dbReference type="TreeFam" id="TF314638"/>
<dbReference type="BRENDA" id="3.1.4.17">
    <property type="organism ID" value="2681"/>
</dbReference>
<dbReference type="PathwayCommons" id="Q01064"/>
<dbReference type="Reactome" id="R-HSA-111957">
    <property type="pathway name" value="Cam-PDE 1 activation"/>
</dbReference>
<dbReference type="Reactome" id="R-HSA-418457">
    <property type="pathway name" value="cGMP effects"/>
</dbReference>
<dbReference type="Reactome" id="R-HSA-418555">
    <property type="pathway name" value="G alpha (s) signalling events"/>
</dbReference>
<dbReference type="SignaLink" id="Q01064"/>
<dbReference type="SIGNOR" id="Q01064"/>
<dbReference type="BioGRID-ORCS" id="5153">
    <property type="hits" value="15 hits in 1154 CRISPR screens"/>
</dbReference>
<dbReference type="EvolutionaryTrace" id="Q01064"/>
<dbReference type="GeneWiki" id="PDE1B"/>
<dbReference type="GenomeRNAi" id="5153"/>
<dbReference type="Pharos" id="Q01064">
    <property type="development level" value="Tclin"/>
</dbReference>
<dbReference type="PRO" id="PR:Q01064"/>
<dbReference type="Proteomes" id="UP000005640">
    <property type="component" value="Chromosome 12"/>
</dbReference>
<dbReference type="RNAct" id="Q01064">
    <property type="molecule type" value="protein"/>
</dbReference>
<dbReference type="Bgee" id="ENSG00000123360">
    <property type="expression patterns" value="Expressed in caudate nucleus and 106 other cell types or tissues"/>
</dbReference>
<dbReference type="ExpressionAtlas" id="Q01064">
    <property type="expression patterns" value="baseline and differential"/>
</dbReference>
<dbReference type="GO" id="GO:0005829">
    <property type="term" value="C:cytosol"/>
    <property type="evidence" value="ECO:0000314"/>
    <property type="project" value="UniProtKB"/>
</dbReference>
<dbReference type="GO" id="GO:0043025">
    <property type="term" value="C:neuronal cell body"/>
    <property type="evidence" value="ECO:0000318"/>
    <property type="project" value="GO_Central"/>
</dbReference>
<dbReference type="GO" id="GO:0004115">
    <property type="term" value="F:3',5'-cyclic-AMP phosphodiesterase activity"/>
    <property type="evidence" value="ECO:0000314"/>
    <property type="project" value="UniProtKB"/>
</dbReference>
<dbReference type="GO" id="GO:0047555">
    <property type="term" value="F:3',5'-cyclic-GMP phosphodiesterase activity"/>
    <property type="evidence" value="ECO:0000314"/>
    <property type="project" value="UniProtKB"/>
</dbReference>
<dbReference type="GO" id="GO:0005516">
    <property type="term" value="F:calmodulin binding"/>
    <property type="evidence" value="ECO:0007669"/>
    <property type="project" value="UniProtKB-KW"/>
</dbReference>
<dbReference type="GO" id="GO:0048101">
    <property type="term" value="F:calmodulin-activated 3',5'-cyclic-GMP phosphodiesterase activity"/>
    <property type="evidence" value="ECO:0000318"/>
    <property type="project" value="GO_Central"/>
</dbReference>
<dbReference type="GO" id="GO:0004117">
    <property type="term" value="F:calmodulin-activated dual specificity 3',5'-cyclic-GMP, 3',5'-cyclic-AMP phosphodiesterase activity"/>
    <property type="evidence" value="ECO:0000314"/>
    <property type="project" value="UniProtKB"/>
</dbReference>
<dbReference type="GO" id="GO:0046872">
    <property type="term" value="F:metal ion binding"/>
    <property type="evidence" value="ECO:0007669"/>
    <property type="project" value="UniProtKB-KW"/>
</dbReference>
<dbReference type="GO" id="GO:0019933">
    <property type="term" value="P:cAMP-mediated signaling"/>
    <property type="evidence" value="ECO:0000318"/>
    <property type="project" value="GO_Central"/>
</dbReference>
<dbReference type="GO" id="GO:0097011">
    <property type="term" value="P:cellular response to granulocyte macrophage colony-stimulating factor stimulus"/>
    <property type="evidence" value="ECO:0000314"/>
    <property type="project" value="UniProtKB"/>
</dbReference>
<dbReference type="GO" id="GO:0036006">
    <property type="term" value="P:cellular response to macrophage colony-stimulating factor stimulus"/>
    <property type="evidence" value="ECO:0000314"/>
    <property type="project" value="UniProtKB"/>
</dbReference>
<dbReference type="GO" id="GO:0042420">
    <property type="term" value="P:dopamine catabolic process"/>
    <property type="evidence" value="ECO:0007669"/>
    <property type="project" value="Ensembl"/>
</dbReference>
<dbReference type="GO" id="GO:0007626">
    <property type="term" value="P:locomotory behavior"/>
    <property type="evidence" value="ECO:0007669"/>
    <property type="project" value="Ensembl"/>
</dbReference>
<dbReference type="GO" id="GO:0030224">
    <property type="term" value="P:monocyte differentiation"/>
    <property type="evidence" value="ECO:0000270"/>
    <property type="project" value="UniProtKB"/>
</dbReference>
<dbReference type="GO" id="GO:0001975">
    <property type="term" value="P:response to amphetamine"/>
    <property type="evidence" value="ECO:0007669"/>
    <property type="project" value="Ensembl"/>
</dbReference>
<dbReference type="GO" id="GO:0042428">
    <property type="term" value="P:serotonin metabolic process"/>
    <property type="evidence" value="ECO:0007669"/>
    <property type="project" value="Ensembl"/>
</dbReference>
<dbReference type="GO" id="GO:0008542">
    <property type="term" value="P:visual learning"/>
    <property type="evidence" value="ECO:0007669"/>
    <property type="project" value="Ensembl"/>
</dbReference>
<dbReference type="CDD" id="cd00077">
    <property type="entry name" value="HDc"/>
    <property type="match status" value="1"/>
</dbReference>
<dbReference type="FunFam" id="1.10.1300.10:FF:000012">
    <property type="entry name" value="Phosphodiesterase"/>
    <property type="match status" value="1"/>
</dbReference>
<dbReference type="Gene3D" id="1.10.1300.10">
    <property type="entry name" value="3'5'-cyclic nucleotide phosphodiesterase, catalytic domain"/>
    <property type="match status" value="1"/>
</dbReference>
<dbReference type="InterPro" id="IPR003607">
    <property type="entry name" value="HD/PDEase_dom"/>
</dbReference>
<dbReference type="InterPro" id="IPR023088">
    <property type="entry name" value="PDEase"/>
</dbReference>
<dbReference type="InterPro" id="IPR002073">
    <property type="entry name" value="PDEase_catalytic_dom"/>
</dbReference>
<dbReference type="InterPro" id="IPR036971">
    <property type="entry name" value="PDEase_catalytic_dom_sf"/>
</dbReference>
<dbReference type="InterPro" id="IPR023174">
    <property type="entry name" value="PDEase_CS"/>
</dbReference>
<dbReference type="InterPro" id="IPR013706">
    <property type="entry name" value="PDEase_N"/>
</dbReference>
<dbReference type="PANTHER" id="PTHR11347">
    <property type="entry name" value="CYCLIC NUCLEOTIDE PHOSPHODIESTERASE"/>
    <property type="match status" value="1"/>
</dbReference>
<dbReference type="Pfam" id="PF00233">
    <property type="entry name" value="PDEase_I"/>
    <property type="match status" value="1"/>
</dbReference>
<dbReference type="Pfam" id="PF08499">
    <property type="entry name" value="PDEase_I_N"/>
    <property type="match status" value="1"/>
</dbReference>
<dbReference type="PRINTS" id="PR00387">
    <property type="entry name" value="PDIESTERASE1"/>
</dbReference>
<dbReference type="SMART" id="SM00471">
    <property type="entry name" value="HDc"/>
    <property type="match status" value="1"/>
</dbReference>
<dbReference type="SUPFAM" id="SSF109604">
    <property type="entry name" value="HD-domain/PDEase-like"/>
    <property type="match status" value="1"/>
</dbReference>
<dbReference type="PROSITE" id="PS00126">
    <property type="entry name" value="PDEASE_I_1"/>
    <property type="match status" value="1"/>
</dbReference>
<dbReference type="PROSITE" id="PS51845">
    <property type="entry name" value="PDEASE_I_2"/>
    <property type="match status" value="1"/>
</dbReference>
<accession>Q01064</accession>
<accession>Q92825</accession>
<accession>Q96KP3</accession>
<protein>
    <recommendedName>
        <fullName evidence="15">Dual specificity calcium/calmodulin-dependent 3',5'-cyclic nucleotide phosphodiesterase 1B</fullName>
        <shortName>Cam-PDE 1B</shortName>
        <ecNumber evidence="6 7 8">3.1.4.17</ecNumber>
    </recommendedName>
    <alternativeName>
        <fullName evidence="10">63 kDa Cam-PDE</fullName>
    </alternativeName>
</protein>
<feature type="chain" id="PRO_0000198789" description="Dual specificity calcium/calmodulin-dependent 3',5'-cyclic nucleotide phosphodiesterase 1B">
    <location>
        <begin position="1"/>
        <end position="536"/>
    </location>
</feature>
<feature type="domain" description="PDEase" evidence="4">
    <location>
        <begin position="146"/>
        <end position="503"/>
    </location>
</feature>
<feature type="region of interest" description="Disordered" evidence="5">
    <location>
        <begin position="1"/>
        <end position="20"/>
    </location>
</feature>
<feature type="region of interest" description="Calmodulin-binding" evidence="2">
    <location>
        <begin position="27"/>
        <end position="47"/>
    </location>
</feature>
<feature type="region of interest" description="Calmodulin-binding" evidence="2">
    <location>
        <begin position="118"/>
        <end position="141"/>
    </location>
</feature>
<feature type="region of interest" description="Disordered" evidence="5">
    <location>
        <begin position="447"/>
        <end position="474"/>
    </location>
</feature>
<feature type="region of interest" description="Disordered" evidence="5">
    <location>
        <begin position="494"/>
        <end position="536"/>
    </location>
</feature>
<feature type="compositionally biased region" description="Polar residues" evidence="5">
    <location>
        <begin position="455"/>
        <end position="464"/>
    </location>
</feature>
<feature type="active site" description="Proton donor" evidence="1">
    <location>
        <position position="223"/>
    </location>
</feature>
<feature type="binding site" evidence="6 17 18 19">
    <location>
        <position position="227"/>
    </location>
    <ligand>
        <name>Zn(2+)</name>
        <dbReference type="ChEBI" id="CHEBI:29105"/>
    </ligand>
</feature>
<feature type="binding site" evidence="6 17 18 19">
    <location>
        <position position="263"/>
    </location>
    <ligand>
        <name>Zn(2+)</name>
        <dbReference type="ChEBI" id="CHEBI:29105"/>
    </ligand>
</feature>
<feature type="binding site" evidence="6 17">
    <location>
        <position position="264"/>
    </location>
    <ligand>
        <name>Mg(2+)</name>
        <dbReference type="ChEBI" id="CHEBI:18420"/>
    </ligand>
</feature>
<feature type="binding site" evidence="6 17 18 19">
    <location>
        <position position="264"/>
    </location>
    <ligand>
        <name>Zn(2+)</name>
        <dbReference type="ChEBI" id="CHEBI:29105"/>
    </ligand>
</feature>
<feature type="binding site" evidence="6 17 18 19">
    <location>
        <position position="370"/>
    </location>
    <ligand>
        <name>Zn(2+)</name>
        <dbReference type="ChEBI" id="CHEBI:29105"/>
    </ligand>
</feature>
<feature type="modified residue" description="Phosphoserine" evidence="3">
    <location>
        <position position="7"/>
    </location>
</feature>
<feature type="modified residue" description="Phosphoserine" evidence="3">
    <location>
        <position position="15"/>
    </location>
</feature>
<feature type="modified residue" description="Phosphoserine" evidence="3">
    <location>
        <position position="466"/>
    </location>
</feature>
<feature type="modified residue" description="Phosphoserine" evidence="3">
    <location>
        <position position="514"/>
    </location>
</feature>
<feature type="splice variant" id="VSP_038643" description="In isoform PDE1B2." evidence="9 11">
    <original>MELSPRSPPEMLEESDCP</original>
    <variation>MANPVPVQRSHLQGPILR</variation>
    <location>
        <begin position="1"/>
        <end position="18"/>
    </location>
</feature>
<feature type="splice variant" id="VSP_038644" description="In isoform PDE1B2." evidence="9 11">
    <location>
        <begin position="19"/>
        <end position="38"/>
    </location>
</feature>
<feature type="sequence conflict" description="In Ref. 2; AAA58405." evidence="13" ref="2">
    <original>QI</original>
    <variation>SM</variation>
    <location>
        <begin position="225"/>
        <end position="226"/>
    </location>
</feature>
<feature type="sequence conflict" description="In Ref. 2; AAA58405." evidence="13" ref="2">
    <original>S</original>
    <variation>A</variation>
    <location>
        <position position="337"/>
    </location>
</feature>
<feature type="helix" evidence="20">
    <location>
        <begin position="152"/>
        <end position="158"/>
    </location>
</feature>
<feature type="turn" evidence="20">
    <location>
        <begin position="159"/>
        <end position="162"/>
    </location>
</feature>
<feature type="helix" evidence="20">
    <location>
        <begin position="168"/>
        <end position="174"/>
    </location>
</feature>
<feature type="helix" evidence="20">
    <location>
        <begin position="179"/>
        <end position="190"/>
    </location>
</feature>
<feature type="helix" evidence="20">
    <location>
        <begin position="193"/>
        <end position="196"/>
    </location>
</feature>
<feature type="helix" evidence="20">
    <location>
        <begin position="201"/>
        <end position="215"/>
    </location>
</feature>
<feature type="turn" evidence="20">
    <location>
        <begin position="216"/>
        <end position="218"/>
    </location>
</feature>
<feature type="strand" evidence="20">
    <location>
        <begin position="221"/>
        <end position="224"/>
    </location>
</feature>
<feature type="helix" evidence="20">
    <location>
        <begin position="225"/>
        <end position="242"/>
    </location>
</feature>
<feature type="helix" evidence="20">
    <location>
        <begin position="244"/>
        <end position="247"/>
    </location>
</feature>
<feature type="helix" evidence="20">
    <location>
        <begin position="250"/>
        <end position="262"/>
    </location>
</feature>
<feature type="turn" evidence="20">
    <location>
        <begin position="263"/>
        <end position="266"/>
    </location>
</feature>
<feature type="helix" evidence="20">
    <location>
        <begin position="272"/>
        <end position="278"/>
    </location>
</feature>
<feature type="helix" evidence="20">
    <location>
        <begin position="281"/>
        <end position="286"/>
    </location>
</feature>
<feature type="helix" evidence="20">
    <location>
        <begin position="291"/>
        <end position="303"/>
    </location>
</feature>
<feature type="helix" evidence="20">
    <location>
        <begin position="307"/>
        <end position="309"/>
    </location>
</feature>
<feature type="turn" evidence="20">
    <location>
        <begin position="311"/>
        <end position="314"/>
    </location>
</feature>
<feature type="helix" evidence="20">
    <location>
        <begin position="317"/>
        <end position="332"/>
    </location>
</feature>
<feature type="helix" evidence="20">
    <location>
        <begin position="336"/>
        <end position="338"/>
    </location>
</feature>
<feature type="helix" evidence="20">
    <location>
        <begin position="339"/>
        <end position="351"/>
    </location>
</feature>
<feature type="helix" evidence="20">
    <location>
        <begin position="358"/>
        <end position="370"/>
    </location>
</feature>
<feature type="helix" evidence="20">
    <location>
        <begin position="373"/>
        <end position="375"/>
    </location>
</feature>
<feature type="helix" evidence="20">
    <location>
        <begin position="378"/>
        <end position="402"/>
    </location>
</feature>
<feature type="helix" evidence="20">
    <location>
        <begin position="414"/>
        <end position="427"/>
    </location>
</feature>
<feature type="helix" evidence="20">
    <location>
        <begin position="429"/>
        <end position="444"/>
    </location>
</feature>
<feature type="turn" evidence="21">
    <location>
        <begin position="446"/>
        <end position="448"/>
    </location>
</feature>
<feature type="helix" evidence="20">
    <location>
        <begin position="476"/>
        <end position="501"/>
    </location>
</feature>
<keyword id="KW-0002">3D-structure</keyword>
<keyword id="KW-0025">Alternative splicing</keyword>
<keyword id="KW-0112">Calmodulin-binding</keyword>
<keyword id="KW-0114">cAMP</keyword>
<keyword id="KW-0140">cGMP</keyword>
<keyword id="KW-0963">Cytoplasm</keyword>
<keyword id="KW-0378">Hydrolase</keyword>
<keyword id="KW-0479">Metal-binding</keyword>
<keyword id="KW-0597">Phosphoprotein</keyword>
<keyword id="KW-1267">Proteomics identification</keyword>
<keyword id="KW-1185">Reference proteome</keyword>
<keyword id="KW-0862">Zinc</keyword>
<evidence type="ECO:0000250" key="1">
    <source>
        <dbReference type="UniProtKB" id="O76083"/>
    </source>
</evidence>
<evidence type="ECO:0000250" key="2">
    <source>
        <dbReference type="UniProtKB" id="P14100"/>
    </source>
</evidence>
<evidence type="ECO:0000250" key="3">
    <source>
        <dbReference type="UniProtKB" id="Q01065"/>
    </source>
</evidence>
<evidence type="ECO:0000255" key="4">
    <source>
        <dbReference type="PROSITE-ProRule" id="PRU01192"/>
    </source>
</evidence>
<evidence type="ECO:0000256" key="5">
    <source>
        <dbReference type="SAM" id="MobiDB-lite"/>
    </source>
</evidence>
<evidence type="ECO:0000269" key="6">
    <source>
    </source>
</evidence>
<evidence type="ECO:0000269" key="7">
    <source>
    </source>
</evidence>
<evidence type="ECO:0000269" key="8">
    <source>
    </source>
</evidence>
<evidence type="ECO:0000303" key="9">
    <source>
    </source>
</evidence>
<evidence type="ECO:0000303" key="10">
    <source>
    </source>
</evidence>
<evidence type="ECO:0000303" key="11">
    <source>
    </source>
</evidence>
<evidence type="ECO:0000303" key="12">
    <source>
    </source>
</evidence>
<evidence type="ECO:0000305" key="13"/>
<evidence type="ECO:0000305" key="14">
    <source>
    </source>
</evidence>
<evidence type="ECO:0000305" key="15">
    <source>
    </source>
</evidence>
<evidence type="ECO:0000312" key="16">
    <source>
        <dbReference type="HGNC" id="HGNC:8775"/>
    </source>
</evidence>
<evidence type="ECO:0007744" key="17">
    <source>
        <dbReference type="PDB" id="1TAZ"/>
    </source>
</evidence>
<evidence type="ECO:0007744" key="18">
    <source>
        <dbReference type="PDB" id="4NPV"/>
    </source>
</evidence>
<evidence type="ECO:0007744" key="19">
    <source>
        <dbReference type="PDB" id="4NPW"/>
    </source>
</evidence>
<evidence type="ECO:0007829" key="20">
    <source>
        <dbReference type="PDB" id="1TAZ"/>
    </source>
</evidence>
<evidence type="ECO:0007829" key="21">
    <source>
        <dbReference type="PDB" id="5B25"/>
    </source>
</evidence>
<organism>
    <name type="scientific">Homo sapiens</name>
    <name type="common">Human</name>
    <dbReference type="NCBI Taxonomy" id="9606"/>
    <lineage>
        <taxon>Eukaryota</taxon>
        <taxon>Metazoa</taxon>
        <taxon>Chordata</taxon>
        <taxon>Craniata</taxon>
        <taxon>Vertebrata</taxon>
        <taxon>Euteleostomi</taxon>
        <taxon>Mammalia</taxon>
        <taxon>Eutheria</taxon>
        <taxon>Euarchontoglires</taxon>
        <taxon>Primates</taxon>
        <taxon>Haplorrhini</taxon>
        <taxon>Catarrhini</taxon>
        <taxon>Hominidae</taxon>
        <taxon>Homo</taxon>
    </lineage>
</organism>
<comment type="function">
    <text evidence="6 7 8">Cyclic nucleotide phosphodiesterase with a dual specificity for the second messengers cAMP and cGMP, which are key regulators of many important physiological processes (PubMed:15260978, PubMed:8855339, PubMed:9419816). Has a preference for cGMP as a substrate (PubMed:9419816).</text>
</comment>
<comment type="catalytic activity">
    <reaction evidence="6 7 8">
        <text>a nucleoside 3',5'-cyclic phosphate + H2O = a nucleoside 5'-phosphate + H(+)</text>
        <dbReference type="Rhea" id="RHEA:14653"/>
        <dbReference type="ChEBI" id="CHEBI:15377"/>
        <dbReference type="ChEBI" id="CHEBI:15378"/>
        <dbReference type="ChEBI" id="CHEBI:57867"/>
        <dbReference type="ChEBI" id="CHEBI:58464"/>
        <dbReference type="EC" id="3.1.4.17"/>
    </reaction>
    <physiologicalReaction direction="left-to-right" evidence="14">
        <dbReference type="Rhea" id="RHEA:14654"/>
    </physiologicalReaction>
</comment>
<comment type="catalytic activity">
    <reaction evidence="6 8">
        <text>3',5'-cyclic GMP + H2O = GMP + H(+)</text>
        <dbReference type="Rhea" id="RHEA:16957"/>
        <dbReference type="ChEBI" id="CHEBI:15377"/>
        <dbReference type="ChEBI" id="CHEBI:15378"/>
        <dbReference type="ChEBI" id="CHEBI:57746"/>
        <dbReference type="ChEBI" id="CHEBI:58115"/>
    </reaction>
    <physiologicalReaction direction="left-to-right" evidence="14">
        <dbReference type="Rhea" id="RHEA:16958"/>
    </physiologicalReaction>
</comment>
<comment type="catalytic activity">
    <reaction evidence="6 7 8">
        <text>3',5'-cyclic AMP + H2O = AMP + H(+)</text>
        <dbReference type="Rhea" id="RHEA:25277"/>
        <dbReference type="ChEBI" id="CHEBI:15377"/>
        <dbReference type="ChEBI" id="CHEBI:15378"/>
        <dbReference type="ChEBI" id="CHEBI:58165"/>
        <dbReference type="ChEBI" id="CHEBI:456215"/>
    </reaction>
    <physiologicalReaction direction="left-to-right" evidence="14">
        <dbReference type="Rhea" id="RHEA:25278"/>
    </physiologicalReaction>
</comment>
<comment type="cofactor">
    <cofactor evidence="6">
        <name>Zn(2+)</name>
        <dbReference type="ChEBI" id="CHEBI:29105"/>
    </cofactor>
    <text evidence="6">Binds 2 divalent metal cations per subunit. Site 1 may preferentially bind zinc ions.</text>
</comment>
<comment type="cofactor">
    <cofactor evidence="6">
        <name>Mg(2+)</name>
        <dbReference type="ChEBI" id="CHEBI:18420"/>
    </cofactor>
    <text evidence="6">Binds 2 divalent metal cations per subunit. Site 2 has a preference for magnesium ions.</text>
</comment>
<comment type="activity regulation">
    <text evidence="8">Type I PDE are activated by the binding of calmodulin in the presence of Ca(2+).</text>
</comment>
<comment type="subunit">
    <text evidence="2">Homodimer.</text>
</comment>
<comment type="interaction">
    <interactant intactId="EBI-7413304">
        <id>Q01064</id>
    </interactant>
    <interactant intactId="EBI-752420">
        <id>Q9NUX5</id>
        <label>POT1</label>
    </interactant>
    <organismsDiffer>false</organismsDiffer>
    <experiments>2</experiments>
</comment>
<comment type="subcellular location">
    <subcellularLocation>
        <location evidence="7">Cytoplasm</location>
        <location evidence="7">Cytosol</location>
    </subcellularLocation>
</comment>
<comment type="alternative products">
    <event type="alternative splicing"/>
    <isoform>
        <id>Q01064-1</id>
        <name evidence="12">PDE1B1</name>
        <sequence type="displayed"/>
    </isoform>
    <isoform>
        <id>Q01064-2</id>
        <name evidence="9">PDE1B2</name>
        <sequence type="described" ref="VSP_038643 VSP_038644"/>
    </isoform>
</comment>
<comment type="similarity">
    <text evidence="13">Belongs to the cyclic nucleotide phosphodiesterase family. PDE1 subfamily.</text>
</comment>
<gene>
    <name evidence="16" type="primary">PDE1B</name>
    <name type="synonym">PDES1B</name>
</gene>
<proteinExistence type="evidence at protein level"/>